<evidence type="ECO:0000255" key="1">
    <source>
        <dbReference type="HAMAP-Rule" id="MF_00917"/>
    </source>
</evidence>
<evidence type="ECO:0000255" key="2">
    <source>
        <dbReference type="PROSITE-ProRule" id="PRU01266"/>
    </source>
</evidence>
<accession>Q9HII0</accession>
<feature type="chain" id="PRO_0000416223" description="7-carboxy-7-deazaguanine synthase">
    <location>
        <begin position="1"/>
        <end position="209"/>
    </location>
</feature>
<feature type="domain" description="Radical SAM core" evidence="2">
    <location>
        <begin position="16"/>
        <end position="205"/>
    </location>
</feature>
<feature type="binding site" evidence="1">
    <location>
        <begin position="10"/>
        <end position="12"/>
    </location>
    <ligand>
        <name>substrate</name>
    </ligand>
</feature>
<feature type="binding site" evidence="1">
    <location>
        <position position="25"/>
    </location>
    <ligand>
        <name>substrate</name>
    </ligand>
</feature>
<feature type="binding site" evidence="1">
    <location>
        <position position="29"/>
    </location>
    <ligand>
        <name>[4Fe-4S] cluster</name>
        <dbReference type="ChEBI" id="CHEBI:49883"/>
        <note>4Fe-4S-S-AdoMet</note>
    </ligand>
</feature>
<feature type="binding site" evidence="1">
    <location>
        <position position="33"/>
    </location>
    <ligand>
        <name>[4Fe-4S] cluster</name>
        <dbReference type="ChEBI" id="CHEBI:49883"/>
        <note>4Fe-4S-S-AdoMet</note>
    </ligand>
</feature>
<feature type="binding site" evidence="1">
    <location>
        <position position="36"/>
    </location>
    <ligand>
        <name>[4Fe-4S] cluster</name>
        <dbReference type="ChEBI" id="CHEBI:49883"/>
        <note>4Fe-4S-S-AdoMet</note>
    </ligand>
</feature>
<feature type="binding site" evidence="1">
    <location>
        <position position="38"/>
    </location>
    <ligand>
        <name>Mg(2+)</name>
        <dbReference type="ChEBI" id="CHEBI:18420"/>
    </ligand>
</feature>
<feature type="binding site" evidence="1">
    <location>
        <position position="68"/>
    </location>
    <ligand>
        <name>substrate</name>
    </ligand>
</feature>
<feature type="binding site" evidence="1">
    <location>
        <position position="70"/>
    </location>
    <ligand>
        <name>S-adenosyl-L-methionine</name>
        <dbReference type="ChEBI" id="CHEBI:59789"/>
    </ligand>
</feature>
<name>QUEE_THEAC</name>
<protein>
    <recommendedName>
        <fullName evidence="1">7-carboxy-7-deazaguanine synthase</fullName>
        <shortName evidence="1">CDG synthase</shortName>
        <ecNumber evidence="1">4.3.99.3</ecNumber>
    </recommendedName>
    <alternativeName>
        <fullName evidence="1">Archaeosine biosynthesis protein QueE</fullName>
    </alternativeName>
</protein>
<keyword id="KW-0004">4Fe-4S</keyword>
<keyword id="KW-0408">Iron</keyword>
<keyword id="KW-0411">Iron-sulfur</keyword>
<keyword id="KW-0456">Lyase</keyword>
<keyword id="KW-0460">Magnesium</keyword>
<keyword id="KW-0479">Metal-binding</keyword>
<keyword id="KW-1185">Reference proteome</keyword>
<keyword id="KW-0949">S-adenosyl-L-methionine</keyword>
<proteinExistence type="inferred from homology"/>
<comment type="function">
    <text evidence="1">Catalyzes the complex heterocyclic radical-mediated conversion of 6-carboxy-5,6,7,8-tetrahydropterin (CPH4) to 7-carboxy-7-deazaguanine (CDG), a step common to the biosynthetic pathways of all 7-deazapurine-containing compounds.</text>
</comment>
<comment type="catalytic activity">
    <reaction evidence="1">
        <text>6-carboxy-5,6,7,8-tetrahydropterin + H(+) = 7-carboxy-7-deazaguanine + NH4(+)</text>
        <dbReference type="Rhea" id="RHEA:27974"/>
        <dbReference type="ChEBI" id="CHEBI:15378"/>
        <dbReference type="ChEBI" id="CHEBI:28938"/>
        <dbReference type="ChEBI" id="CHEBI:61032"/>
        <dbReference type="ChEBI" id="CHEBI:61036"/>
        <dbReference type="EC" id="4.3.99.3"/>
    </reaction>
</comment>
<comment type="cofactor">
    <cofactor evidence="1">
        <name>[4Fe-4S] cluster</name>
        <dbReference type="ChEBI" id="CHEBI:49883"/>
    </cofactor>
    <text evidence="1">Binds 1 [4Fe-4S] cluster. The cluster is coordinated with 3 cysteines and an exchangeable S-adenosyl-L-methionine.</text>
</comment>
<comment type="cofactor">
    <cofactor evidence="1">
        <name>S-adenosyl-L-methionine</name>
        <dbReference type="ChEBI" id="CHEBI:59789"/>
    </cofactor>
    <text evidence="1">Binds 1 S-adenosyl-L-methionine per subunit.</text>
</comment>
<comment type="cofactor">
    <cofactor evidence="1">
        <name>Mg(2+)</name>
        <dbReference type="ChEBI" id="CHEBI:18420"/>
    </cofactor>
</comment>
<comment type="pathway">
    <text evidence="1">Purine metabolism; 7-cyano-7-deazaguanine biosynthesis.</text>
</comment>
<comment type="subunit">
    <text evidence="1">Homodimer.</text>
</comment>
<comment type="similarity">
    <text evidence="1">Belongs to the radical SAM superfamily. 7-carboxy-7-deazaguanine synthase family.</text>
</comment>
<organism>
    <name type="scientific">Thermoplasma acidophilum (strain ATCC 25905 / DSM 1728 / JCM 9062 / NBRC 15155 / AMRC-C165)</name>
    <dbReference type="NCBI Taxonomy" id="273075"/>
    <lineage>
        <taxon>Archaea</taxon>
        <taxon>Methanobacteriati</taxon>
        <taxon>Thermoplasmatota</taxon>
        <taxon>Thermoplasmata</taxon>
        <taxon>Thermoplasmatales</taxon>
        <taxon>Thermoplasmataceae</taxon>
        <taxon>Thermoplasma</taxon>
    </lineage>
</organism>
<reference key="1">
    <citation type="journal article" date="2000" name="Nature">
        <title>The genome sequence of the thermoacidophilic scavenger Thermoplasma acidophilum.</title>
        <authorList>
            <person name="Ruepp A."/>
            <person name="Graml W."/>
            <person name="Santos-Martinez M.-L."/>
            <person name="Koretke K.K."/>
            <person name="Volker C."/>
            <person name="Mewes H.-W."/>
            <person name="Frishman D."/>
            <person name="Stocker S."/>
            <person name="Lupas A.N."/>
            <person name="Baumeister W."/>
        </authorList>
    </citation>
    <scope>NUCLEOTIDE SEQUENCE [LARGE SCALE GENOMIC DNA]</scope>
    <source>
        <strain>ATCC 25905 / DSM 1728 / JCM 9062 / NBRC 15155 / AMRC-C165</strain>
    </source>
</reference>
<gene>
    <name evidence="1" type="primary">queE</name>
    <name type="ordered locus">Ta1359</name>
</gene>
<sequence length="209" mass="23642">MLITEIFHSIQGEGPYAGLPMLFVRTNVCNIRCEWCDTKYSFYGGKEIPLSELLGIVKEAKEGWVCFTGGEPLVQRDALAFVKSVVDMGKNVLIETNGTISIRNFVFSDRIFIDMDVKPPSAKVTKGFLMDNLRYLRKQDYLKIVIKDDTDLDFAIDFVDRYGEGLSFVFQPAWGSDIRRIADRIVGTGYNVRVLPQIHKIIYGDVPGV</sequence>
<dbReference type="EC" id="4.3.99.3" evidence="1"/>
<dbReference type="EMBL" id="AL445067">
    <property type="protein sequence ID" value="CAC12480.1"/>
    <property type="molecule type" value="Genomic_DNA"/>
</dbReference>
<dbReference type="RefSeq" id="WP_010901766.1">
    <property type="nucleotide sequence ID" value="NC_002578.1"/>
</dbReference>
<dbReference type="SMR" id="Q9HII0"/>
<dbReference type="FunCoup" id="Q9HII0">
    <property type="interactions" value="1"/>
</dbReference>
<dbReference type="STRING" id="273075.gene:9572586"/>
<dbReference type="PaxDb" id="273075-Ta1359"/>
<dbReference type="DNASU" id="1456830"/>
<dbReference type="EnsemblBacteria" id="CAC12480">
    <property type="protein sequence ID" value="CAC12480"/>
    <property type="gene ID" value="CAC12480"/>
</dbReference>
<dbReference type="KEGG" id="tac:Ta1359"/>
<dbReference type="eggNOG" id="arCOG02173">
    <property type="taxonomic scope" value="Archaea"/>
</dbReference>
<dbReference type="HOGENOM" id="CLU_066739_2_3_2"/>
<dbReference type="InParanoid" id="Q9HII0"/>
<dbReference type="OrthoDB" id="7980at2157"/>
<dbReference type="UniPathway" id="UPA00391"/>
<dbReference type="Proteomes" id="UP000001024">
    <property type="component" value="Chromosome"/>
</dbReference>
<dbReference type="GO" id="GO:0051539">
    <property type="term" value="F:4 iron, 4 sulfur cluster binding"/>
    <property type="evidence" value="ECO:0007669"/>
    <property type="project" value="UniProtKB-UniRule"/>
</dbReference>
<dbReference type="GO" id="GO:0016840">
    <property type="term" value="F:carbon-nitrogen lyase activity"/>
    <property type="evidence" value="ECO:0007669"/>
    <property type="project" value="UniProtKB-UniRule"/>
</dbReference>
<dbReference type="GO" id="GO:0000287">
    <property type="term" value="F:magnesium ion binding"/>
    <property type="evidence" value="ECO:0007669"/>
    <property type="project" value="UniProtKB-UniRule"/>
</dbReference>
<dbReference type="GO" id="GO:1904047">
    <property type="term" value="F:S-adenosyl-L-methionine binding"/>
    <property type="evidence" value="ECO:0007669"/>
    <property type="project" value="UniProtKB-UniRule"/>
</dbReference>
<dbReference type="CDD" id="cd01335">
    <property type="entry name" value="Radical_SAM"/>
    <property type="match status" value="1"/>
</dbReference>
<dbReference type="Gene3D" id="3.20.20.70">
    <property type="entry name" value="Aldolase class I"/>
    <property type="match status" value="1"/>
</dbReference>
<dbReference type="HAMAP" id="MF_00917">
    <property type="entry name" value="QueE"/>
    <property type="match status" value="1"/>
</dbReference>
<dbReference type="InterPro" id="IPR024924">
    <property type="entry name" value="7-CO-7-deazaguanine_synth-like"/>
</dbReference>
<dbReference type="InterPro" id="IPR013785">
    <property type="entry name" value="Aldolase_TIM"/>
</dbReference>
<dbReference type="InterPro" id="IPR007197">
    <property type="entry name" value="rSAM"/>
</dbReference>
<dbReference type="PANTHER" id="PTHR42836">
    <property type="entry name" value="7-CARBOXY-7-DEAZAGUANINE SYNTHASE"/>
    <property type="match status" value="1"/>
</dbReference>
<dbReference type="PANTHER" id="PTHR42836:SF1">
    <property type="entry name" value="7-CARBOXY-7-DEAZAGUANINE SYNTHASE"/>
    <property type="match status" value="1"/>
</dbReference>
<dbReference type="Pfam" id="PF04055">
    <property type="entry name" value="Radical_SAM"/>
    <property type="match status" value="1"/>
</dbReference>
<dbReference type="PIRSF" id="PIRSF000370">
    <property type="entry name" value="QueE"/>
    <property type="match status" value="1"/>
</dbReference>
<dbReference type="SFLD" id="SFLDS00029">
    <property type="entry name" value="Radical_SAM"/>
    <property type="match status" value="1"/>
</dbReference>
<dbReference type="SUPFAM" id="SSF102114">
    <property type="entry name" value="Radical SAM enzymes"/>
    <property type="match status" value="1"/>
</dbReference>
<dbReference type="PROSITE" id="PS51918">
    <property type="entry name" value="RADICAL_SAM"/>
    <property type="match status" value="1"/>
</dbReference>